<feature type="chain" id="PRO_1000053747" description="Uracil phosphoribosyltransferase">
    <location>
        <begin position="1"/>
        <end position="223"/>
    </location>
</feature>
<feature type="binding site" evidence="1">
    <location>
        <position position="86"/>
    </location>
    <ligand>
        <name>5-phospho-alpha-D-ribose 1-diphosphate</name>
        <dbReference type="ChEBI" id="CHEBI:58017"/>
    </ligand>
</feature>
<feature type="binding site" evidence="1">
    <location>
        <position position="111"/>
    </location>
    <ligand>
        <name>5-phospho-alpha-D-ribose 1-diphosphate</name>
        <dbReference type="ChEBI" id="CHEBI:58017"/>
    </ligand>
</feature>
<feature type="binding site" evidence="1">
    <location>
        <begin position="145"/>
        <end position="153"/>
    </location>
    <ligand>
        <name>5-phospho-alpha-D-ribose 1-diphosphate</name>
        <dbReference type="ChEBI" id="CHEBI:58017"/>
    </ligand>
</feature>
<feature type="binding site" evidence="1">
    <location>
        <position position="209"/>
    </location>
    <ligand>
        <name>uracil</name>
        <dbReference type="ChEBI" id="CHEBI:17568"/>
    </ligand>
</feature>
<feature type="binding site" evidence="1">
    <location>
        <begin position="214"/>
        <end position="216"/>
    </location>
    <ligand>
        <name>uracil</name>
        <dbReference type="ChEBI" id="CHEBI:17568"/>
    </ligand>
</feature>
<feature type="binding site" evidence="1">
    <location>
        <position position="215"/>
    </location>
    <ligand>
        <name>5-phospho-alpha-D-ribose 1-diphosphate</name>
        <dbReference type="ChEBI" id="CHEBI:58017"/>
    </ligand>
</feature>
<gene>
    <name evidence="1" type="primary">upp</name>
    <name type="ordered locus">NP_1408A</name>
</gene>
<keyword id="KW-0021">Allosteric enzyme</keyword>
<keyword id="KW-0328">Glycosyltransferase</keyword>
<keyword id="KW-0342">GTP-binding</keyword>
<keyword id="KW-0460">Magnesium</keyword>
<keyword id="KW-0547">Nucleotide-binding</keyword>
<keyword id="KW-1185">Reference proteome</keyword>
<keyword id="KW-0808">Transferase</keyword>
<accession>Q3ISU0</accession>
<evidence type="ECO:0000255" key="1">
    <source>
        <dbReference type="HAMAP-Rule" id="MF_01218"/>
    </source>
</evidence>
<protein>
    <recommendedName>
        <fullName evidence="1">Uracil phosphoribosyltransferase</fullName>
        <ecNumber evidence="1">2.4.2.9</ecNumber>
    </recommendedName>
    <alternativeName>
        <fullName evidence="1">UMP pyrophosphorylase</fullName>
    </alternativeName>
    <alternativeName>
        <fullName evidence="1">UPRTase</fullName>
    </alternativeName>
</protein>
<reference key="1">
    <citation type="journal article" date="2005" name="Genome Res.">
        <title>Living with two extremes: conclusions from the genome sequence of Natronomonas pharaonis.</title>
        <authorList>
            <person name="Falb M."/>
            <person name="Pfeiffer F."/>
            <person name="Palm P."/>
            <person name="Rodewald K."/>
            <person name="Hickmann V."/>
            <person name="Tittor J."/>
            <person name="Oesterhelt D."/>
        </authorList>
    </citation>
    <scope>NUCLEOTIDE SEQUENCE [LARGE SCALE GENOMIC DNA]</scope>
    <source>
        <strain>ATCC 35678 / DSM 2160 / CIP 103997 / JCM 8858 / NBRC 14720 / NCIMB 2260 / Gabara</strain>
    </source>
</reference>
<organism>
    <name type="scientific">Natronomonas pharaonis (strain ATCC 35678 / DSM 2160 / CIP 103997 / JCM 8858 / NBRC 14720 / NCIMB 2260 / Gabara)</name>
    <name type="common">Halobacterium pharaonis</name>
    <dbReference type="NCBI Taxonomy" id="348780"/>
    <lineage>
        <taxon>Archaea</taxon>
        <taxon>Methanobacteriati</taxon>
        <taxon>Methanobacteriota</taxon>
        <taxon>Stenosarchaea group</taxon>
        <taxon>Halobacteria</taxon>
        <taxon>Halobacteriales</taxon>
        <taxon>Haloarculaceae</taxon>
        <taxon>Natronomonas</taxon>
    </lineage>
</organism>
<sequence>MPIEDRDDAHVITHALAKHTLSELRSDETDQVAFRNGLVELGRLCGYEIIDGMMDTEYVSITTPLAETTGEVVKGLDDVVIVNVLRAATPFVEGLVEAFPHARQGVISAGRDEAAGMNEDGEFPITVDYVKLPDIDADDTVIVADPILATGSTMVAVLEEVLEQGTPERLVVLSAVSAPPGLARVNDSIPSADVLTVSVDERLDEDGYIVPGVGDAGDRAFGT</sequence>
<proteinExistence type="inferred from homology"/>
<dbReference type="EC" id="2.4.2.9" evidence="1"/>
<dbReference type="EMBL" id="CR936257">
    <property type="protein sequence ID" value="CAI48795.1"/>
    <property type="molecule type" value="Genomic_DNA"/>
</dbReference>
<dbReference type="RefSeq" id="WP_011322430.1">
    <property type="nucleotide sequence ID" value="NC_007426.1"/>
</dbReference>
<dbReference type="SMR" id="Q3ISU0"/>
<dbReference type="STRING" id="348780.NP_1408A"/>
<dbReference type="EnsemblBacteria" id="CAI48795">
    <property type="protein sequence ID" value="CAI48795"/>
    <property type="gene ID" value="NP_1408A"/>
</dbReference>
<dbReference type="GeneID" id="3703445"/>
<dbReference type="KEGG" id="nph:NP_1408A"/>
<dbReference type="eggNOG" id="arCOG04128">
    <property type="taxonomic scope" value="Archaea"/>
</dbReference>
<dbReference type="HOGENOM" id="CLU_067096_2_0_2"/>
<dbReference type="OrthoDB" id="80352at2157"/>
<dbReference type="UniPathway" id="UPA00574">
    <property type="reaction ID" value="UER00636"/>
</dbReference>
<dbReference type="Proteomes" id="UP000002698">
    <property type="component" value="Chromosome"/>
</dbReference>
<dbReference type="GO" id="GO:0005525">
    <property type="term" value="F:GTP binding"/>
    <property type="evidence" value="ECO:0007669"/>
    <property type="project" value="UniProtKB-KW"/>
</dbReference>
<dbReference type="GO" id="GO:0000287">
    <property type="term" value="F:magnesium ion binding"/>
    <property type="evidence" value="ECO:0007669"/>
    <property type="project" value="UniProtKB-UniRule"/>
</dbReference>
<dbReference type="GO" id="GO:0004845">
    <property type="term" value="F:uracil phosphoribosyltransferase activity"/>
    <property type="evidence" value="ECO:0007669"/>
    <property type="project" value="UniProtKB-UniRule"/>
</dbReference>
<dbReference type="GO" id="GO:0044206">
    <property type="term" value="P:UMP salvage"/>
    <property type="evidence" value="ECO:0007669"/>
    <property type="project" value="UniProtKB-UniRule"/>
</dbReference>
<dbReference type="GO" id="GO:0006223">
    <property type="term" value="P:uracil salvage"/>
    <property type="evidence" value="ECO:0007669"/>
    <property type="project" value="InterPro"/>
</dbReference>
<dbReference type="CDD" id="cd06223">
    <property type="entry name" value="PRTases_typeI"/>
    <property type="match status" value="1"/>
</dbReference>
<dbReference type="Gene3D" id="3.40.50.2020">
    <property type="match status" value="1"/>
</dbReference>
<dbReference type="HAMAP" id="MF_01218_A">
    <property type="entry name" value="Upp_A"/>
    <property type="match status" value="1"/>
</dbReference>
<dbReference type="InterPro" id="IPR000836">
    <property type="entry name" value="PRibTrfase_dom"/>
</dbReference>
<dbReference type="InterPro" id="IPR029057">
    <property type="entry name" value="PRTase-like"/>
</dbReference>
<dbReference type="InterPro" id="IPR034331">
    <property type="entry name" value="Upp_A"/>
</dbReference>
<dbReference type="InterPro" id="IPR050054">
    <property type="entry name" value="UPRTase/APRTase"/>
</dbReference>
<dbReference type="InterPro" id="IPR005765">
    <property type="entry name" value="Ura_phspho_trans"/>
</dbReference>
<dbReference type="NCBIfam" id="NF001097">
    <property type="entry name" value="PRK00129.1"/>
    <property type="match status" value="1"/>
</dbReference>
<dbReference type="NCBIfam" id="TIGR01091">
    <property type="entry name" value="upp"/>
    <property type="match status" value="1"/>
</dbReference>
<dbReference type="PANTHER" id="PTHR32315">
    <property type="entry name" value="ADENINE PHOSPHORIBOSYLTRANSFERASE"/>
    <property type="match status" value="1"/>
</dbReference>
<dbReference type="PANTHER" id="PTHR32315:SF4">
    <property type="entry name" value="URACIL PHOSPHORIBOSYLTRANSFERASE, CHLOROPLASTIC"/>
    <property type="match status" value="1"/>
</dbReference>
<dbReference type="Pfam" id="PF14681">
    <property type="entry name" value="UPRTase"/>
    <property type="match status" value="1"/>
</dbReference>
<dbReference type="SUPFAM" id="SSF53271">
    <property type="entry name" value="PRTase-like"/>
    <property type="match status" value="1"/>
</dbReference>
<name>UPP_NATPD</name>
<comment type="function">
    <text evidence="1">Catalyzes the conversion of uracil and 5-phospho-alpha-D-ribose 1-diphosphate (PRPP) to UMP and diphosphate.</text>
</comment>
<comment type="catalytic activity">
    <reaction evidence="1">
        <text>UMP + diphosphate = 5-phospho-alpha-D-ribose 1-diphosphate + uracil</text>
        <dbReference type="Rhea" id="RHEA:13017"/>
        <dbReference type="ChEBI" id="CHEBI:17568"/>
        <dbReference type="ChEBI" id="CHEBI:33019"/>
        <dbReference type="ChEBI" id="CHEBI:57865"/>
        <dbReference type="ChEBI" id="CHEBI:58017"/>
        <dbReference type="EC" id="2.4.2.9"/>
    </reaction>
</comment>
<comment type="cofactor">
    <cofactor evidence="1">
        <name>Mg(2+)</name>
        <dbReference type="ChEBI" id="CHEBI:18420"/>
    </cofactor>
    <text evidence="1">Binds 1 Mg(2+) ion per subunit. The magnesium is bound as Mg-PRPP.</text>
</comment>
<comment type="activity regulation">
    <text evidence="1">Allosterically activated by GTP.</text>
</comment>
<comment type="pathway">
    <text evidence="1">Pyrimidine metabolism; UMP biosynthesis via salvage pathway; UMP from uracil: step 1/1.</text>
</comment>
<comment type="similarity">
    <text evidence="1">Belongs to the UPRTase family.</text>
</comment>